<proteinExistence type="inferred from homology"/>
<organism>
    <name type="scientific">Salmonella paratyphi C (strain RKS4594)</name>
    <dbReference type="NCBI Taxonomy" id="476213"/>
    <lineage>
        <taxon>Bacteria</taxon>
        <taxon>Pseudomonadati</taxon>
        <taxon>Pseudomonadota</taxon>
        <taxon>Gammaproteobacteria</taxon>
        <taxon>Enterobacterales</taxon>
        <taxon>Enterobacteriaceae</taxon>
        <taxon>Salmonella</taxon>
    </lineage>
</organism>
<name>PYRE_SALPC</name>
<reference key="1">
    <citation type="journal article" date="2009" name="PLoS ONE">
        <title>Salmonella paratyphi C: genetic divergence from Salmonella choleraesuis and pathogenic convergence with Salmonella typhi.</title>
        <authorList>
            <person name="Liu W.-Q."/>
            <person name="Feng Y."/>
            <person name="Wang Y."/>
            <person name="Zou Q.-H."/>
            <person name="Chen F."/>
            <person name="Guo J.-T."/>
            <person name="Peng Y.-H."/>
            <person name="Jin Y."/>
            <person name="Li Y.-G."/>
            <person name="Hu S.-N."/>
            <person name="Johnston R.N."/>
            <person name="Liu G.-R."/>
            <person name="Liu S.-L."/>
        </authorList>
    </citation>
    <scope>NUCLEOTIDE SEQUENCE [LARGE SCALE GENOMIC DNA]</scope>
    <source>
        <strain>RKS4594</strain>
    </source>
</reference>
<feature type="chain" id="PRO_1000164691" description="Orotate phosphoribosyltransferase">
    <location>
        <begin position="1"/>
        <end position="213"/>
    </location>
</feature>
<feature type="binding site" description="in other chain" evidence="1">
    <location>
        <position position="26"/>
    </location>
    <ligand>
        <name>5-phospho-alpha-D-ribose 1-diphosphate</name>
        <dbReference type="ChEBI" id="CHEBI:58017"/>
        <note>ligand shared between dimeric partners</note>
    </ligand>
</feature>
<feature type="binding site" evidence="1">
    <location>
        <begin position="34"/>
        <end position="35"/>
    </location>
    <ligand>
        <name>orotate</name>
        <dbReference type="ChEBI" id="CHEBI:30839"/>
    </ligand>
</feature>
<feature type="binding site" description="in other chain" evidence="1">
    <location>
        <begin position="72"/>
        <end position="73"/>
    </location>
    <ligand>
        <name>5-phospho-alpha-D-ribose 1-diphosphate</name>
        <dbReference type="ChEBI" id="CHEBI:58017"/>
        <note>ligand shared between dimeric partners</note>
    </ligand>
</feature>
<feature type="binding site" evidence="1">
    <location>
        <position position="99"/>
    </location>
    <ligand>
        <name>5-phospho-alpha-D-ribose 1-diphosphate</name>
        <dbReference type="ChEBI" id="CHEBI:58017"/>
        <note>ligand shared between dimeric partners</note>
    </ligand>
</feature>
<feature type="binding site" description="in other chain" evidence="1">
    <location>
        <position position="100"/>
    </location>
    <ligand>
        <name>5-phospho-alpha-D-ribose 1-diphosphate</name>
        <dbReference type="ChEBI" id="CHEBI:58017"/>
        <note>ligand shared between dimeric partners</note>
    </ligand>
</feature>
<feature type="binding site" evidence="1">
    <location>
        <position position="103"/>
    </location>
    <ligand>
        <name>5-phospho-alpha-D-ribose 1-diphosphate</name>
        <dbReference type="ChEBI" id="CHEBI:58017"/>
        <note>ligand shared between dimeric partners</note>
    </ligand>
</feature>
<feature type="binding site" evidence="1">
    <location>
        <position position="105"/>
    </location>
    <ligand>
        <name>5-phospho-alpha-D-ribose 1-diphosphate</name>
        <dbReference type="ChEBI" id="CHEBI:58017"/>
        <note>ligand shared between dimeric partners</note>
    </ligand>
</feature>
<feature type="binding site" description="in other chain" evidence="1">
    <location>
        <begin position="124"/>
        <end position="132"/>
    </location>
    <ligand>
        <name>5-phospho-alpha-D-ribose 1-diphosphate</name>
        <dbReference type="ChEBI" id="CHEBI:58017"/>
        <note>ligand shared between dimeric partners</note>
    </ligand>
</feature>
<feature type="binding site" evidence="1">
    <location>
        <position position="128"/>
    </location>
    <ligand>
        <name>orotate</name>
        <dbReference type="ChEBI" id="CHEBI:30839"/>
    </ligand>
</feature>
<feature type="binding site" evidence="1">
    <location>
        <position position="156"/>
    </location>
    <ligand>
        <name>orotate</name>
        <dbReference type="ChEBI" id="CHEBI:30839"/>
    </ligand>
</feature>
<keyword id="KW-0328">Glycosyltransferase</keyword>
<keyword id="KW-0460">Magnesium</keyword>
<keyword id="KW-0665">Pyrimidine biosynthesis</keyword>
<keyword id="KW-0808">Transferase</keyword>
<protein>
    <recommendedName>
        <fullName evidence="1">Orotate phosphoribosyltransferase</fullName>
        <shortName evidence="1">OPRT</shortName>
        <shortName evidence="1">OPRTase</shortName>
        <ecNumber evidence="1">2.4.2.10</ecNumber>
    </recommendedName>
</protein>
<evidence type="ECO:0000255" key="1">
    <source>
        <dbReference type="HAMAP-Rule" id="MF_01208"/>
    </source>
</evidence>
<accession>C0Q1X4</accession>
<gene>
    <name evidence="1" type="primary">pyrE</name>
    <name type="ordered locus">SPC_3815</name>
</gene>
<comment type="function">
    <text evidence="1">Catalyzes the transfer of a ribosyl phosphate group from 5-phosphoribose 1-diphosphate to orotate, leading to the formation of orotidine monophosphate (OMP).</text>
</comment>
<comment type="catalytic activity">
    <reaction evidence="1">
        <text>orotidine 5'-phosphate + diphosphate = orotate + 5-phospho-alpha-D-ribose 1-diphosphate</text>
        <dbReference type="Rhea" id="RHEA:10380"/>
        <dbReference type="ChEBI" id="CHEBI:30839"/>
        <dbReference type="ChEBI" id="CHEBI:33019"/>
        <dbReference type="ChEBI" id="CHEBI:57538"/>
        <dbReference type="ChEBI" id="CHEBI:58017"/>
        <dbReference type="EC" id="2.4.2.10"/>
    </reaction>
</comment>
<comment type="cofactor">
    <cofactor evidence="1">
        <name>Mg(2+)</name>
        <dbReference type="ChEBI" id="CHEBI:18420"/>
    </cofactor>
</comment>
<comment type="pathway">
    <text evidence="1">Pyrimidine metabolism; UMP biosynthesis via de novo pathway; UMP from orotate: step 1/2.</text>
</comment>
<comment type="subunit">
    <text evidence="1">Homodimer.</text>
</comment>
<comment type="similarity">
    <text evidence="1">Belongs to the purine/pyrimidine phosphoribosyltransferase family. PyrE subfamily.</text>
</comment>
<dbReference type="EC" id="2.4.2.10" evidence="1"/>
<dbReference type="EMBL" id="CP000857">
    <property type="protein sequence ID" value="ACN47890.1"/>
    <property type="molecule type" value="Genomic_DNA"/>
</dbReference>
<dbReference type="RefSeq" id="WP_000806167.1">
    <property type="nucleotide sequence ID" value="NC_012125.1"/>
</dbReference>
<dbReference type="SMR" id="C0Q1X4"/>
<dbReference type="KEGG" id="sei:SPC_3815"/>
<dbReference type="HOGENOM" id="CLU_074878_0_1_6"/>
<dbReference type="UniPathway" id="UPA00070">
    <property type="reaction ID" value="UER00119"/>
</dbReference>
<dbReference type="Proteomes" id="UP000001599">
    <property type="component" value="Chromosome"/>
</dbReference>
<dbReference type="GO" id="GO:0005737">
    <property type="term" value="C:cytoplasm"/>
    <property type="evidence" value="ECO:0007669"/>
    <property type="project" value="TreeGrafter"/>
</dbReference>
<dbReference type="GO" id="GO:0000287">
    <property type="term" value="F:magnesium ion binding"/>
    <property type="evidence" value="ECO:0007669"/>
    <property type="project" value="UniProtKB-UniRule"/>
</dbReference>
<dbReference type="GO" id="GO:0004588">
    <property type="term" value="F:orotate phosphoribosyltransferase activity"/>
    <property type="evidence" value="ECO:0007669"/>
    <property type="project" value="UniProtKB-UniRule"/>
</dbReference>
<dbReference type="GO" id="GO:0006207">
    <property type="term" value="P:'de novo' pyrimidine nucleobase biosynthetic process"/>
    <property type="evidence" value="ECO:0007669"/>
    <property type="project" value="TreeGrafter"/>
</dbReference>
<dbReference type="GO" id="GO:0044205">
    <property type="term" value="P:'de novo' UMP biosynthetic process"/>
    <property type="evidence" value="ECO:0007669"/>
    <property type="project" value="UniProtKB-UniRule"/>
</dbReference>
<dbReference type="GO" id="GO:0046132">
    <property type="term" value="P:pyrimidine ribonucleoside biosynthetic process"/>
    <property type="evidence" value="ECO:0007669"/>
    <property type="project" value="TreeGrafter"/>
</dbReference>
<dbReference type="CDD" id="cd06223">
    <property type="entry name" value="PRTases_typeI"/>
    <property type="match status" value="1"/>
</dbReference>
<dbReference type="FunFam" id="3.40.50.2020:FF:000008">
    <property type="entry name" value="Orotate phosphoribosyltransferase"/>
    <property type="match status" value="1"/>
</dbReference>
<dbReference type="Gene3D" id="3.40.50.2020">
    <property type="match status" value="1"/>
</dbReference>
<dbReference type="HAMAP" id="MF_01208">
    <property type="entry name" value="PyrE"/>
    <property type="match status" value="1"/>
</dbReference>
<dbReference type="InterPro" id="IPR023031">
    <property type="entry name" value="OPRT"/>
</dbReference>
<dbReference type="InterPro" id="IPR004467">
    <property type="entry name" value="Or_phspho_trans_dom"/>
</dbReference>
<dbReference type="InterPro" id="IPR000836">
    <property type="entry name" value="PRibTrfase_dom"/>
</dbReference>
<dbReference type="InterPro" id="IPR029057">
    <property type="entry name" value="PRTase-like"/>
</dbReference>
<dbReference type="NCBIfam" id="TIGR00336">
    <property type="entry name" value="pyrE"/>
    <property type="match status" value="1"/>
</dbReference>
<dbReference type="PANTHER" id="PTHR46683">
    <property type="entry name" value="OROTATE PHOSPHORIBOSYLTRANSFERASE 1-RELATED"/>
    <property type="match status" value="1"/>
</dbReference>
<dbReference type="PANTHER" id="PTHR46683:SF1">
    <property type="entry name" value="OROTATE PHOSPHORIBOSYLTRANSFERASE 1-RELATED"/>
    <property type="match status" value="1"/>
</dbReference>
<dbReference type="Pfam" id="PF00156">
    <property type="entry name" value="Pribosyltran"/>
    <property type="match status" value="1"/>
</dbReference>
<dbReference type="SUPFAM" id="SSF53271">
    <property type="entry name" value="PRTase-like"/>
    <property type="match status" value="1"/>
</dbReference>
<dbReference type="PROSITE" id="PS00103">
    <property type="entry name" value="PUR_PYR_PR_TRANSFER"/>
    <property type="match status" value="1"/>
</dbReference>
<sequence length="213" mass="23562">MKPYQRQFIEFALNKQVLKFGEFTLKSGRKSPYFFNAGLFNTGRDLALLGRFYAEALVDSGIEFDLLFGPAYKGIPIATTTAVALAEHHDKDLPYCFNRKEAKDHGEGGSLVGSALQGRVMLVDDVITAGTAIRESMEIIQAHGATLAGVLISLDRQERGRGEISAIQEVERDYGCKVISIITLKDLIAYLEEKPDMAEHLAAVRAYREEFGV</sequence>